<name>Y940_XYLF2</name>
<reference key="1">
    <citation type="journal article" date="2010" name="J. Bacteriol.">
        <title>Whole genome sequences of two Xylella fastidiosa strains (M12 and M23) causing almond leaf scorch disease in California.</title>
        <authorList>
            <person name="Chen J."/>
            <person name="Xie G."/>
            <person name="Han S."/>
            <person name="Chertkov O."/>
            <person name="Sims D."/>
            <person name="Civerolo E.L."/>
        </authorList>
    </citation>
    <scope>NUCLEOTIDE SEQUENCE [LARGE SCALE GENOMIC DNA]</scope>
    <source>
        <strain>M23</strain>
    </source>
</reference>
<sequence>MGRGPSIEARKNASDSKRGKIFTKIIRQIGVAARAGGGDPSNNPSLRVVIDKALASNMSKDVIERAIKKAIGEMEGVQYEEVRYEGYAPGGVAVIVDCLTDNRLRTVSDVRHAFSKCGGNMGTEGSVAFMFKRLGVLSYAHAIADEERITEAAIDAGAEDVMVYIEDDEIEVITTPEAFSRVKEEMAALGLMPYHAEITFRADSDIVVDGDTAIQVRKLLDILEDLDDVQDVYSNVDQVTLGKR</sequence>
<keyword id="KW-0963">Cytoplasm</keyword>
<keyword id="KW-0238">DNA-binding</keyword>
<keyword id="KW-0804">Transcription</keyword>
<keyword id="KW-0805">Transcription regulation</keyword>
<protein>
    <recommendedName>
        <fullName evidence="1">Probable transcriptional regulatory protein XfasM23_0940</fullName>
    </recommendedName>
</protein>
<comment type="subcellular location">
    <subcellularLocation>
        <location evidence="1">Cytoplasm</location>
    </subcellularLocation>
</comment>
<comment type="similarity">
    <text evidence="1">Belongs to the TACO1 family.</text>
</comment>
<dbReference type="EMBL" id="CP001011">
    <property type="protein sequence ID" value="ACB92372.1"/>
    <property type="molecule type" value="Genomic_DNA"/>
</dbReference>
<dbReference type="RefSeq" id="WP_004572895.1">
    <property type="nucleotide sequence ID" value="NC_010577.1"/>
</dbReference>
<dbReference type="SMR" id="B2I4S7"/>
<dbReference type="KEGG" id="xfn:XfasM23_0940"/>
<dbReference type="HOGENOM" id="CLU_062974_2_2_6"/>
<dbReference type="Proteomes" id="UP000001698">
    <property type="component" value="Chromosome"/>
</dbReference>
<dbReference type="GO" id="GO:0005829">
    <property type="term" value="C:cytosol"/>
    <property type="evidence" value="ECO:0007669"/>
    <property type="project" value="TreeGrafter"/>
</dbReference>
<dbReference type="GO" id="GO:0003677">
    <property type="term" value="F:DNA binding"/>
    <property type="evidence" value="ECO:0007669"/>
    <property type="project" value="UniProtKB-UniRule"/>
</dbReference>
<dbReference type="GO" id="GO:0006355">
    <property type="term" value="P:regulation of DNA-templated transcription"/>
    <property type="evidence" value="ECO:0007669"/>
    <property type="project" value="UniProtKB-UniRule"/>
</dbReference>
<dbReference type="FunFam" id="1.10.10.200:FF:000004">
    <property type="entry name" value="Probable transcriptional regulatory protein BSBG_02618"/>
    <property type="match status" value="1"/>
</dbReference>
<dbReference type="Gene3D" id="1.10.10.200">
    <property type="match status" value="1"/>
</dbReference>
<dbReference type="Gene3D" id="3.30.70.980">
    <property type="match status" value="2"/>
</dbReference>
<dbReference type="HAMAP" id="MF_00693">
    <property type="entry name" value="Transcrip_reg_TACO1"/>
    <property type="match status" value="1"/>
</dbReference>
<dbReference type="InterPro" id="IPR017856">
    <property type="entry name" value="Integrase-like_N"/>
</dbReference>
<dbReference type="InterPro" id="IPR048300">
    <property type="entry name" value="TACO1_YebC-like_2nd/3rd_dom"/>
</dbReference>
<dbReference type="InterPro" id="IPR049083">
    <property type="entry name" value="TACO1_YebC_N"/>
</dbReference>
<dbReference type="InterPro" id="IPR002876">
    <property type="entry name" value="Transcrip_reg_TACO1-like"/>
</dbReference>
<dbReference type="InterPro" id="IPR026564">
    <property type="entry name" value="Transcrip_reg_TACO1-like_dom3"/>
</dbReference>
<dbReference type="InterPro" id="IPR029072">
    <property type="entry name" value="YebC-like"/>
</dbReference>
<dbReference type="NCBIfam" id="NF001030">
    <property type="entry name" value="PRK00110.1"/>
    <property type="match status" value="1"/>
</dbReference>
<dbReference type="NCBIfam" id="NF009044">
    <property type="entry name" value="PRK12378.1"/>
    <property type="match status" value="1"/>
</dbReference>
<dbReference type="NCBIfam" id="TIGR01033">
    <property type="entry name" value="YebC/PmpR family DNA-binding transcriptional regulator"/>
    <property type="match status" value="1"/>
</dbReference>
<dbReference type="PANTHER" id="PTHR12532:SF6">
    <property type="entry name" value="TRANSCRIPTIONAL REGULATORY PROTEIN YEBC-RELATED"/>
    <property type="match status" value="1"/>
</dbReference>
<dbReference type="PANTHER" id="PTHR12532">
    <property type="entry name" value="TRANSLATIONAL ACTIVATOR OF CYTOCHROME C OXIDASE 1"/>
    <property type="match status" value="1"/>
</dbReference>
<dbReference type="Pfam" id="PF20772">
    <property type="entry name" value="TACO1_YebC_N"/>
    <property type="match status" value="1"/>
</dbReference>
<dbReference type="Pfam" id="PF01709">
    <property type="entry name" value="Transcrip_reg"/>
    <property type="match status" value="1"/>
</dbReference>
<dbReference type="SUPFAM" id="SSF75625">
    <property type="entry name" value="YebC-like"/>
    <property type="match status" value="1"/>
</dbReference>
<feature type="chain" id="PRO_1000132259" description="Probable transcriptional regulatory protein XfasM23_0940">
    <location>
        <begin position="1"/>
        <end position="244"/>
    </location>
</feature>
<evidence type="ECO:0000255" key="1">
    <source>
        <dbReference type="HAMAP-Rule" id="MF_00693"/>
    </source>
</evidence>
<organism>
    <name type="scientific">Xylella fastidiosa (strain M23)</name>
    <dbReference type="NCBI Taxonomy" id="405441"/>
    <lineage>
        <taxon>Bacteria</taxon>
        <taxon>Pseudomonadati</taxon>
        <taxon>Pseudomonadota</taxon>
        <taxon>Gammaproteobacteria</taxon>
        <taxon>Lysobacterales</taxon>
        <taxon>Lysobacteraceae</taxon>
        <taxon>Xylella</taxon>
    </lineage>
</organism>
<proteinExistence type="inferred from homology"/>
<gene>
    <name type="ordered locus">XfasM23_0940</name>
</gene>
<accession>B2I4S7</accession>